<reference key="1">
    <citation type="submission" date="2008-06" db="EMBL/GenBank/DDBJ databases">
        <title>Complete sequence of Pelodictyon phaeoclathratiforme BU-1.</title>
        <authorList>
            <consortium name="US DOE Joint Genome Institute"/>
            <person name="Lucas S."/>
            <person name="Copeland A."/>
            <person name="Lapidus A."/>
            <person name="Glavina del Rio T."/>
            <person name="Dalin E."/>
            <person name="Tice H."/>
            <person name="Bruce D."/>
            <person name="Goodwin L."/>
            <person name="Pitluck S."/>
            <person name="Schmutz J."/>
            <person name="Larimer F."/>
            <person name="Land M."/>
            <person name="Hauser L."/>
            <person name="Kyrpides N."/>
            <person name="Mikhailova N."/>
            <person name="Liu Z."/>
            <person name="Li T."/>
            <person name="Zhao F."/>
            <person name="Overmann J."/>
            <person name="Bryant D.A."/>
            <person name="Richardson P."/>
        </authorList>
    </citation>
    <scope>NUCLEOTIDE SEQUENCE [LARGE SCALE GENOMIC DNA]</scope>
    <source>
        <strain>DSM 5477 / BU-1</strain>
    </source>
</reference>
<dbReference type="EC" id="2.1.2.10" evidence="1"/>
<dbReference type="EMBL" id="CP001110">
    <property type="protein sequence ID" value="ACF44553.1"/>
    <property type="molecule type" value="Genomic_DNA"/>
</dbReference>
<dbReference type="RefSeq" id="WP_012509027.1">
    <property type="nucleotide sequence ID" value="NC_011060.1"/>
</dbReference>
<dbReference type="SMR" id="B4SED4"/>
<dbReference type="STRING" id="324925.Ppha_2360"/>
<dbReference type="KEGG" id="pph:Ppha_2360"/>
<dbReference type="eggNOG" id="COG0404">
    <property type="taxonomic scope" value="Bacteria"/>
</dbReference>
<dbReference type="HOGENOM" id="CLU_007884_10_2_10"/>
<dbReference type="OrthoDB" id="9774591at2"/>
<dbReference type="Proteomes" id="UP000002724">
    <property type="component" value="Chromosome"/>
</dbReference>
<dbReference type="GO" id="GO:0005829">
    <property type="term" value="C:cytosol"/>
    <property type="evidence" value="ECO:0007669"/>
    <property type="project" value="TreeGrafter"/>
</dbReference>
<dbReference type="GO" id="GO:0005960">
    <property type="term" value="C:glycine cleavage complex"/>
    <property type="evidence" value="ECO:0007669"/>
    <property type="project" value="InterPro"/>
</dbReference>
<dbReference type="GO" id="GO:0004047">
    <property type="term" value="F:aminomethyltransferase activity"/>
    <property type="evidence" value="ECO:0007669"/>
    <property type="project" value="UniProtKB-UniRule"/>
</dbReference>
<dbReference type="GO" id="GO:0008483">
    <property type="term" value="F:transaminase activity"/>
    <property type="evidence" value="ECO:0007669"/>
    <property type="project" value="UniProtKB-KW"/>
</dbReference>
<dbReference type="GO" id="GO:0019464">
    <property type="term" value="P:glycine decarboxylation via glycine cleavage system"/>
    <property type="evidence" value="ECO:0007669"/>
    <property type="project" value="UniProtKB-UniRule"/>
</dbReference>
<dbReference type="FunFam" id="3.30.70.1400:FF:000001">
    <property type="entry name" value="Aminomethyltransferase"/>
    <property type="match status" value="1"/>
</dbReference>
<dbReference type="Gene3D" id="2.40.30.110">
    <property type="entry name" value="Aminomethyltransferase beta-barrel domains"/>
    <property type="match status" value="1"/>
</dbReference>
<dbReference type="Gene3D" id="3.30.70.1400">
    <property type="entry name" value="Aminomethyltransferase beta-barrel domains"/>
    <property type="match status" value="1"/>
</dbReference>
<dbReference type="Gene3D" id="4.10.1250.10">
    <property type="entry name" value="Aminomethyltransferase fragment"/>
    <property type="match status" value="1"/>
</dbReference>
<dbReference type="Gene3D" id="3.30.1360.120">
    <property type="entry name" value="Probable tRNA modification gtpase trme, domain 1"/>
    <property type="match status" value="1"/>
</dbReference>
<dbReference type="HAMAP" id="MF_00259">
    <property type="entry name" value="GcvT"/>
    <property type="match status" value="1"/>
</dbReference>
<dbReference type="InterPro" id="IPR006223">
    <property type="entry name" value="GCS_T"/>
</dbReference>
<dbReference type="InterPro" id="IPR022903">
    <property type="entry name" value="GCS_T_bac"/>
</dbReference>
<dbReference type="InterPro" id="IPR013977">
    <property type="entry name" value="GCST_C"/>
</dbReference>
<dbReference type="InterPro" id="IPR006222">
    <property type="entry name" value="GCV_T_N"/>
</dbReference>
<dbReference type="InterPro" id="IPR028896">
    <property type="entry name" value="GcvT/YgfZ/DmdA"/>
</dbReference>
<dbReference type="InterPro" id="IPR029043">
    <property type="entry name" value="GcvT/YgfZ_C"/>
</dbReference>
<dbReference type="InterPro" id="IPR027266">
    <property type="entry name" value="TrmE/GcvT_dom1"/>
</dbReference>
<dbReference type="NCBIfam" id="TIGR00528">
    <property type="entry name" value="gcvT"/>
    <property type="match status" value="1"/>
</dbReference>
<dbReference type="NCBIfam" id="NF001567">
    <property type="entry name" value="PRK00389.1"/>
    <property type="match status" value="1"/>
</dbReference>
<dbReference type="PANTHER" id="PTHR43757">
    <property type="entry name" value="AMINOMETHYLTRANSFERASE"/>
    <property type="match status" value="1"/>
</dbReference>
<dbReference type="PANTHER" id="PTHR43757:SF2">
    <property type="entry name" value="AMINOMETHYLTRANSFERASE, MITOCHONDRIAL"/>
    <property type="match status" value="1"/>
</dbReference>
<dbReference type="Pfam" id="PF01571">
    <property type="entry name" value="GCV_T"/>
    <property type="match status" value="1"/>
</dbReference>
<dbReference type="Pfam" id="PF08669">
    <property type="entry name" value="GCV_T_C"/>
    <property type="match status" value="1"/>
</dbReference>
<dbReference type="PIRSF" id="PIRSF006487">
    <property type="entry name" value="GcvT"/>
    <property type="match status" value="1"/>
</dbReference>
<dbReference type="SUPFAM" id="SSF101790">
    <property type="entry name" value="Aminomethyltransferase beta-barrel domain"/>
    <property type="match status" value="1"/>
</dbReference>
<dbReference type="SUPFAM" id="SSF103025">
    <property type="entry name" value="Folate-binding domain"/>
    <property type="match status" value="1"/>
</dbReference>
<organism>
    <name type="scientific">Pelodictyon phaeoclathratiforme (strain DSM 5477 / BU-1)</name>
    <dbReference type="NCBI Taxonomy" id="324925"/>
    <lineage>
        <taxon>Bacteria</taxon>
        <taxon>Pseudomonadati</taxon>
        <taxon>Chlorobiota</taxon>
        <taxon>Chlorobiia</taxon>
        <taxon>Chlorobiales</taxon>
        <taxon>Chlorobiaceae</taxon>
        <taxon>Chlorobium/Pelodictyon group</taxon>
        <taxon>Pelodictyon</taxon>
    </lineage>
</organism>
<comment type="function">
    <text evidence="1">The glycine cleavage system catalyzes the degradation of glycine.</text>
</comment>
<comment type="catalytic activity">
    <reaction evidence="1">
        <text>N(6)-[(R)-S(8)-aminomethyldihydrolipoyl]-L-lysyl-[protein] + (6S)-5,6,7,8-tetrahydrofolate = N(6)-[(R)-dihydrolipoyl]-L-lysyl-[protein] + (6R)-5,10-methylene-5,6,7,8-tetrahydrofolate + NH4(+)</text>
        <dbReference type="Rhea" id="RHEA:16945"/>
        <dbReference type="Rhea" id="RHEA-COMP:10475"/>
        <dbReference type="Rhea" id="RHEA-COMP:10492"/>
        <dbReference type="ChEBI" id="CHEBI:15636"/>
        <dbReference type="ChEBI" id="CHEBI:28938"/>
        <dbReference type="ChEBI" id="CHEBI:57453"/>
        <dbReference type="ChEBI" id="CHEBI:83100"/>
        <dbReference type="ChEBI" id="CHEBI:83143"/>
        <dbReference type="EC" id="2.1.2.10"/>
    </reaction>
</comment>
<comment type="subunit">
    <text evidence="1">The glycine cleavage system is composed of four proteins: P, T, L and H.</text>
</comment>
<comment type="similarity">
    <text evidence="1">Belongs to the GcvT family.</text>
</comment>
<name>GCST_PELPB</name>
<feature type="chain" id="PRO_1000114101" description="Aminomethyltransferase">
    <location>
        <begin position="1"/>
        <end position="365"/>
    </location>
</feature>
<gene>
    <name evidence="1" type="primary">gcvT</name>
    <name type="ordered locus">Ppha_2360</name>
</gene>
<accession>B4SED4</accession>
<keyword id="KW-0032">Aminotransferase</keyword>
<keyword id="KW-1185">Reference proteome</keyword>
<keyword id="KW-0808">Transferase</keyword>
<evidence type="ECO:0000255" key="1">
    <source>
        <dbReference type="HAMAP-Rule" id="MF_00259"/>
    </source>
</evidence>
<proteinExistence type="inferred from homology"/>
<sequence length="365" mass="40395">MKKTALYSWHEEAGAKIIDFGGYLMPVQYRGIIAEHHAVRSAAGLFDVSHMGNFYVRGARAKEFLQYMTTNDLDNAEDGQAQYNLMLYPHGGIVDDLIIYRIDSETFFLIVNASNAQKDFEWLQQHIAAFEGVVLEDHTDQLSLIALQGPLALNILATVFPALDVPALGAFRFCKVLFQGTEVMIAGTGYTGEKGVEICLPNAMALPLWEALFEAGKESGIQPIGLGARDTLRLEMGYSLYGHEIDQDTNPLEARLKWVVKMGKGHFMGKEACQQVEGNLKRGVAGFSLDGRVLPRQHFKLYNSDRQEIGWVCSGTLSPTLQEPVGTCNVVREYLKPGTPILVEVRGSLHTGVIRRLPFVTTSLS</sequence>
<protein>
    <recommendedName>
        <fullName evidence="1">Aminomethyltransferase</fullName>
        <ecNumber evidence="1">2.1.2.10</ecNumber>
    </recommendedName>
    <alternativeName>
        <fullName evidence="1">Glycine cleavage system T protein</fullName>
    </alternativeName>
</protein>